<dbReference type="EMBL" id="AE017355">
    <property type="protein sequence ID" value="AAT60568.1"/>
    <property type="molecule type" value="Genomic_DNA"/>
</dbReference>
<dbReference type="RefSeq" id="WP_000196012.1">
    <property type="nucleotide sequence ID" value="NC_005957.1"/>
</dbReference>
<dbReference type="RefSeq" id="YP_037830.1">
    <property type="nucleotide sequence ID" value="NC_005957.1"/>
</dbReference>
<dbReference type="SMR" id="Q6HF46"/>
<dbReference type="KEGG" id="btk:BT9727_3510"/>
<dbReference type="PATRIC" id="fig|281309.8.peg.3747"/>
<dbReference type="HOGENOM" id="CLU_002472_3_2_9"/>
<dbReference type="Proteomes" id="UP000001301">
    <property type="component" value="Chromosome"/>
</dbReference>
<dbReference type="GO" id="GO:0005829">
    <property type="term" value="C:cytosol"/>
    <property type="evidence" value="ECO:0007669"/>
    <property type="project" value="TreeGrafter"/>
</dbReference>
<dbReference type="GO" id="GO:0005524">
    <property type="term" value="F:ATP binding"/>
    <property type="evidence" value="ECO:0007669"/>
    <property type="project" value="UniProtKB-UniRule"/>
</dbReference>
<dbReference type="GO" id="GO:0140664">
    <property type="term" value="F:ATP-dependent DNA damage sensor activity"/>
    <property type="evidence" value="ECO:0007669"/>
    <property type="project" value="InterPro"/>
</dbReference>
<dbReference type="GO" id="GO:0003684">
    <property type="term" value="F:damaged DNA binding"/>
    <property type="evidence" value="ECO:0007669"/>
    <property type="project" value="UniProtKB-UniRule"/>
</dbReference>
<dbReference type="GO" id="GO:0030983">
    <property type="term" value="F:mismatched DNA binding"/>
    <property type="evidence" value="ECO:0007669"/>
    <property type="project" value="InterPro"/>
</dbReference>
<dbReference type="GO" id="GO:0006298">
    <property type="term" value="P:mismatch repair"/>
    <property type="evidence" value="ECO:0007669"/>
    <property type="project" value="UniProtKB-UniRule"/>
</dbReference>
<dbReference type="CDD" id="cd03284">
    <property type="entry name" value="ABC_MutS1"/>
    <property type="match status" value="1"/>
</dbReference>
<dbReference type="FunFam" id="1.10.1420.10:FF:000007">
    <property type="entry name" value="DNA mismatch repair protein MutS"/>
    <property type="match status" value="1"/>
</dbReference>
<dbReference type="FunFam" id="3.30.420.110:FF:000007">
    <property type="entry name" value="DNA mismatch repair protein MutS"/>
    <property type="match status" value="1"/>
</dbReference>
<dbReference type="FunFam" id="3.40.1170.10:FF:000001">
    <property type="entry name" value="DNA mismatch repair protein MutS"/>
    <property type="match status" value="1"/>
</dbReference>
<dbReference type="FunFam" id="3.40.50.300:FF:000896">
    <property type="entry name" value="DNA mismatch repair protein MutS"/>
    <property type="match status" value="1"/>
</dbReference>
<dbReference type="Gene3D" id="1.10.1420.10">
    <property type="match status" value="2"/>
</dbReference>
<dbReference type="Gene3D" id="3.40.1170.10">
    <property type="entry name" value="DNA repair protein MutS, domain I"/>
    <property type="match status" value="1"/>
</dbReference>
<dbReference type="Gene3D" id="3.30.420.110">
    <property type="entry name" value="MutS, connector domain"/>
    <property type="match status" value="1"/>
</dbReference>
<dbReference type="Gene3D" id="3.40.50.300">
    <property type="entry name" value="P-loop containing nucleotide triphosphate hydrolases"/>
    <property type="match status" value="1"/>
</dbReference>
<dbReference type="HAMAP" id="MF_00096">
    <property type="entry name" value="MutS"/>
    <property type="match status" value="1"/>
</dbReference>
<dbReference type="InterPro" id="IPR005748">
    <property type="entry name" value="DNA_mismatch_repair_MutS"/>
</dbReference>
<dbReference type="InterPro" id="IPR007695">
    <property type="entry name" value="DNA_mismatch_repair_MutS-lik_N"/>
</dbReference>
<dbReference type="InterPro" id="IPR017261">
    <property type="entry name" value="DNA_mismatch_repair_MutS/MSH"/>
</dbReference>
<dbReference type="InterPro" id="IPR000432">
    <property type="entry name" value="DNA_mismatch_repair_MutS_C"/>
</dbReference>
<dbReference type="InterPro" id="IPR007861">
    <property type="entry name" value="DNA_mismatch_repair_MutS_clamp"/>
</dbReference>
<dbReference type="InterPro" id="IPR007696">
    <property type="entry name" value="DNA_mismatch_repair_MutS_core"/>
</dbReference>
<dbReference type="InterPro" id="IPR016151">
    <property type="entry name" value="DNA_mismatch_repair_MutS_N"/>
</dbReference>
<dbReference type="InterPro" id="IPR036187">
    <property type="entry name" value="DNA_mismatch_repair_MutS_sf"/>
</dbReference>
<dbReference type="InterPro" id="IPR007860">
    <property type="entry name" value="DNA_mmatch_repair_MutS_con_dom"/>
</dbReference>
<dbReference type="InterPro" id="IPR045076">
    <property type="entry name" value="MutS"/>
</dbReference>
<dbReference type="InterPro" id="IPR036678">
    <property type="entry name" value="MutS_con_dom_sf"/>
</dbReference>
<dbReference type="InterPro" id="IPR027417">
    <property type="entry name" value="P-loop_NTPase"/>
</dbReference>
<dbReference type="NCBIfam" id="TIGR01070">
    <property type="entry name" value="mutS1"/>
    <property type="match status" value="1"/>
</dbReference>
<dbReference type="NCBIfam" id="NF003810">
    <property type="entry name" value="PRK05399.1"/>
    <property type="match status" value="1"/>
</dbReference>
<dbReference type="PANTHER" id="PTHR11361:SF34">
    <property type="entry name" value="DNA MISMATCH REPAIR PROTEIN MSH1, MITOCHONDRIAL"/>
    <property type="match status" value="1"/>
</dbReference>
<dbReference type="PANTHER" id="PTHR11361">
    <property type="entry name" value="DNA MISMATCH REPAIR PROTEIN MUTS FAMILY MEMBER"/>
    <property type="match status" value="1"/>
</dbReference>
<dbReference type="Pfam" id="PF01624">
    <property type="entry name" value="MutS_I"/>
    <property type="match status" value="1"/>
</dbReference>
<dbReference type="Pfam" id="PF05188">
    <property type="entry name" value="MutS_II"/>
    <property type="match status" value="1"/>
</dbReference>
<dbReference type="Pfam" id="PF05192">
    <property type="entry name" value="MutS_III"/>
    <property type="match status" value="1"/>
</dbReference>
<dbReference type="Pfam" id="PF05190">
    <property type="entry name" value="MutS_IV"/>
    <property type="match status" value="1"/>
</dbReference>
<dbReference type="Pfam" id="PF00488">
    <property type="entry name" value="MutS_V"/>
    <property type="match status" value="1"/>
</dbReference>
<dbReference type="PIRSF" id="PIRSF037677">
    <property type="entry name" value="DNA_mis_repair_Msh6"/>
    <property type="match status" value="1"/>
</dbReference>
<dbReference type="SMART" id="SM00534">
    <property type="entry name" value="MUTSac"/>
    <property type="match status" value="1"/>
</dbReference>
<dbReference type="SMART" id="SM00533">
    <property type="entry name" value="MUTSd"/>
    <property type="match status" value="1"/>
</dbReference>
<dbReference type="SUPFAM" id="SSF55271">
    <property type="entry name" value="DNA repair protein MutS, domain I"/>
    <property type="match status" value="1"/>
</dbReference>
<dbReference type="SUPFAM" id="SSF53150">
    <property type="entry name" value="DNA repair protein MutS, domain II"/>
    <property type="match status" value="1"/>
</dbReference>
<dbReference type="SUPFAM" id="SSF48334">
    <property type="entry name" value="DNA repair protein MutS, domain III"/>
    <property type="match status" value="1"/>
</dbReference>
<dbReference type="SUPFAM" id="SSF52540">
    <property type="entry name" value="P-loop containing nucleoside triphosphate hydrolases"/>
    <property type="match status" value="1"/>
</dbReference>
<dbReference type="PROSITE" id="PS00486">
    <property type="entry name" value="DNA_MISMATCH_REPAIR_2"/>
    <property type="match status" value="1"/>
</dbReference>
<feature type="chain" id="PRO_0000224348" description="DNA mismatch repair protein MutS">
    <location>
        <begin position="1"/>
        <end position="890"/>
    </location>
</feature>
<feature type="binding site" evidence="1">
    <location>
        <begin position="607"/>
        <end position="614"/>
    </location>
    <ligand>
        <name>ATP</name>
        <dbReference type="ChEBI" id="CHEBI:30616"/>
    </ligand>
</feature>
<comment type="function">
    <text evidence="1">This protein is involved in the repair of mismatches in DNA. It is possible that it carries out the mismatch recognition step. This protein has a weak ATPase activity.</text>
</comment>
<comment type="similarity">
    <text evidence="1">Belongs to the DNA mismatch repair MutS family.</text>
</comment>
<evidence type="ECO:0000255" key="1">
    <source>
        <dbReference type="HAMAP-Rule" id="MF_00096"/>
    </source>
</evidence>
<proteinExistence type="inferred from homology"/>
<reference key="1">
    <citation type="journal article" date="2006" name="J. Bacteriol.">
        <title>Pathogenomic sequence analysis of Bacillus cereus and Bacillus thuringiensis isolates closely related to Bacillus anthracis.</title>
        <authorList>
            <person name="Han C.S."/>
            <person name="Xie G."/>
            <person name="Challacombe J.F."/>
            <person name="Altherr M.R."/>
            <person name="Bhotika S.S."/>
            <person name="Bruce D."/>
            <person name="Campbell C.S."/>
            <person name="Campbell M.L."/>
            <person name="Chen J."/>
            <person name="Chertkov O."/>
            <person name="Cleland C."/>
            <person name="Dimitrijevic M."/>
            <person name="Doggett N.A."/>
            <person name="Fawcett J.J."/>
            <person name="Glavina T."/>
            <person name="Goodwin L.A."/>
            <person name="Hill K.K."/>
            <person name="Hitchcock P."/>
            <person name="Jackson P.J."/>
            <person name="Keim P."/>
            <person name="Kewalramani A.R."/>
            <person name="Longmire J."/>
            <person name="Lucas S."/>
            <person name="Malfatti S."/>
            <person name="McMurry K."/>
            <person name="Meincke L.J."/>
            <person name="Misra M."/>
            <person name="Moseman B.L."/>
            <person name="Mundt M."/>
            <person name="Munk A.C."/>
            <person name="Okinaka R.T."/>
            <person name="Parson-Quintana B."/>
            <person name="Reilly L.P."/>
            <person name="Richardson P."/>
            <person name="Robinson D.L."/>
            <person name="Rubin E."/>
            <person name="Saunders E."/>
            <person name="Tapia R."/>
            <person name="Tesmer J.G."/>
            <person name="Thayer N."/>
            <person name="Thompson L.S."/>
            <person name="Tice H."/>
            <person name="Ticknor L.O."/>
            <person name="Wills P.L."/>
            <person name="Brettin T.S."/>
            <person name="Gilna P."/>
        </authorList>
    </citation>
    <scope>NUCLEOTIDE SEQUENCE [LARGE SCALE GENOMIC DNA]</scope>
    <source>
        <strain>97-27</strain>
    </source>
</reference>
<sequence>MTQYTPMIQQYLKVKADYQDAFLFFRLGDFYEMFFEDAVKAAHELEITLTSRDGGSSERIPMCGVPYHAAKNYIEQLVEKGYKVAVCEQVEDPKTAKGVVRREVVQLITPGTMMEGRTIDEKENNFLAALTHFEDGSYALACNDLTTGQNTVTLLTGSVEDILLEVYATGSKEIVVDSSFSKDELNKLTETLKMTISYEDATAIPEGLEHLVKNVSQAKLIKAVGRLFNYVIRTQKRSLDHLQPVEIYYTNQFMKIDVHSKRNLELTETLRTKEKTGSLLWLLDKTKTAMGGRMLKQWMERPLIQKERIEERLEMVETFVNDYFLREDLKEKLKEVYDLERLAGKVAFGNVNARDLLQLRRSLLQVPAILEAISLLDNAYAARLIQGADPCESLTELLGRSIQENPPLSIKDGDIIKDGYNDKLDQYRYVSKNGKTWIAELEKRERDITGIKSLKIGYNRIFGYYIEVTKANLGALPEGRYERKQTLANAERFITDELKEKETLILEAEEKIVQLEYDLFTALREEVKVFIPKLQHLAKVISELDVLQSFATVSEEEQFVKPVLTTKREIFIKDGRHPVVEKVLNGKLYVPNDCIMPENMDVFLITGPNMSGKSTYMRQLALVTVMSQIGCFVPATEAVLPVFDQIFTRIGAADDLISGQSTFMVEMLEAKNAIANASERSLILFDEIGRGTSTYDGMALAQAIIEHIHDQIGAKTLFSTHYHELTVLEDSLDQLKNVHVSAIEENGKVVFLHKIQDGAADKSYGIHVAQLAELPDSLIARAKEVLAQLEGQEEIVIPKRVEVKEQEVIPEPVVVKEEPVAIEETKVDNKEESQLSFFGTEQSSKKQDKPVLDVKETAVLTQIKKIDLLDMTPLEAMNELYRLQKKLKKG</sequence>
<name>MUTS_BACHK</name>
<protein>
    <recommendedName>
        <fullName evidence="1">DNA mismatch repair protein MutS</fullName>
    </recommendedName>
</protein>
<organism>
    <name type="scientific">Bacillus thuringiensis subsp. konkukian (strain 97-27)</name>
    <dbReference type="NCBI Taxonomy" id="281309"/>
    <lineage>
        <taxon>Bacteria</taxon>
        <taxon>Bacillati</taxon>
        <taxon>Bacillota</taxon>
        <taxon>Bacilli</taxon>
        <taxon>Bacillales</taxon>
        <taxon>Bacillaceae</taxon>
        <taxon>Bacillus</taxon>
        <taxon>Bacillus cereus group</taxon>
    </lineage>
</organism>
<gene>
    <name evidence="1" type="primary">mutS</name>
    <name type="ordered locus">BT9727_3510</name>
</gene>
<keyword id="KW-0067">ATP-binding</keyword>
<keyword id="KW-0227">DNA damage</keyword>
<keyword id="KW-0234">DNA repair</keyword>
<keyword id="KW-0238">DNA-binding</keyword>
<keyword id="KW-0547">Nucleotide-binding</keyword>
<accession>Q6HF46</accession>